<evidence type="ECO:0000255" key="1">
    <source>
        <dbReference type="HAMAP-Rule" id="MF_01218"/>
    </source>
</evidence>
<sequence>MSNVTVVSHPLVQHKLTKMRDKTTSTKTFRALMRETATLICYEVTRDLPMDEVQIETPVAPTKAYEIAGKKLVFAPILRTGLGMCEGMLDLVPSARVAHIGLYRDHETLEAVEYYFKAPEDIAGRLVIVVDPMLATGHSAIAAIARLKHYGVTNLRFVCLLAAQAGVDALREAHPDVPIWTAAIDQTLNDHGYIVPGLGDAGDRTFGTR</sequence>
<reference key="1">
    <citation type="journal article" date="2010" name="J. Bacteriol.">
        <title>The genetic basis of laboratory adaptation in Caulobacter crescentus.</title>
        <authorList>
            <person name="Marks M.E."/>
            <person name="Castro-Rojas C.M."/>
            <person name="Teiling C."/>
            <person name="Du L."/>
            <person name="Kapatral V."/>
            <person name="Walunas T.L."/>
            <person name="Crosson S."/>
        </authorList>
    </citation>
    <scope>NUCLEOTIDE SEQUENCE [LARGE SCALE GENOMIC DNA]</scope>
    <source>
        <strain>NA1000 / CB15N</strain>
    </source>
</reference>
<dbReference type="EC" id="2.4.2.9" evidence="1"/>
<dbReference type="EMBL" id="CP001340">
    <property type="protein sequence ID" value="ACL95816.1"/>
    <property type="molecule type" value="Genomic_DNA"/>
</dbReference>
<dbReference type="RefSeq" id="WP_010920129.1">
    <property type="nucleotide sequence ID" value="NC_011916.1"/>
</dbReference>
<dbReference type="RefSeq" id="YP_002517724.1">
    <property type="nucleotide sequence ID" value="NC_011916.1"/>
</dbReference>
<dbReference type="SMR" id="B8GYP3"/>
<dbReference type="GeneID" id="7332305"/>
<dbReference type="KEGG" id="ccs:CCNA_02351"/>
<dbReference type="PATRIC" id="fig|565050.3.peg.2303"/>
<dbReference type="HOGENOM" id="CLU_067096_2_2_5"/>
<dbReference type="OrthoDB" id="9781675at2"/>
<dbReference type="PhylomeDB" id="B8GYP3"/>
<dbReference type="UniPathway" id="UPA00574">
    <property type="reaction ID" value="UER00636"/>
</dbReference>
<dbReference type="Proteomes" id="UP000001364">
    <property type="component" value="Chromosome"/>
</dbReference>
<dbReference type="GO" id="GO:0005525">
    <property type="term" value="F:GTP binding"/>
    <property type="evidence" value="ECO:0007669"/>
    <property type="project" value="UniProtKB-KW"/>
</dbReference>
<dbReference type="GO" id="GO:0000287">
    <property type="term" value="F:magnesium ion binding"/>
    <property type="evidence" value="ECO:0007669"/>
    <property type="project" value="UniProtKB-UniRule"/>
</dbReference>
<dbReference type="GO" id="GO:0004845">
    <property type="term" value="F:uracil phosphoribosyltransferase activity"/>
    <property type="evidence" value="ECO:0007669"/>
    <property type="project" value="UniProtKB-UniRule"/>
</dbReference>
<dbReference type="GO" id="GO:0044206">
    <property type="term" value="P:UMP salvage"/>
    <property type="evidence" value="ECO:0007669"/>
    <property type="project" value="UniProtKB-UniRule"/>
</dbReference>
<dbReference type="GO" id="GO:0006223">
    <property type="term" value="P:uracil salvage"/>
    <property type="evidence" value="ECO:0007669"/>
    <property type="project" value="InterPro"/>
</dbReference>
<dbReference type="CDD" id="cd06223">
    <property type="entry name" value="PRTases_typeI"/>
    <property type="match status" value="1"/>
</dbReference>
<dbReference type="FunFam" id="3.40.50.2020:FF:000003">
    <property type="entry name" value="Uracil phosphoribosyltransferase"/>
    <property type="match status" value="1"/>
</dbReference>
<dbReference type="Gene3D" id="3.40.50.2020">
    <property type="match status" value="1"/>
</dbReference>
<dbReference type="HAMAP" id="MF_01218_B">
    <property type="entry name" value="Upp_B"/>
    <property type="match status" value="1"/>
</dbReference>
<dbReference type="InterPro" id="IPR000836">
    <property type="entry name" value="PRibTrfase_dom"/>
</dbReference>
<dbReference type="InterPro" id="IPR029057">
    <property type="entry name" value="PRTase-like"/>
</dbReference>
<dbReference type="InterPro" id="IPR034332">
    <property type="entry name" value="Upp_B"/>
</dbReference>
<dbReference type="InterPro" id="IPR050054">
    <property type="entry name" value="UPRTase/APRTase"/>
</dbReference>
<dbReference type="InterPro" id="IPR005765">
    <property type="entry name" value="Ura_phspho_trans"/>
</dbReference>
<dbReference type="NCBIfam" id="NF001097">
    <property type="entry name" value="PRK00129.1"/>
    <property type="match status" value="1"/>
</dbReference>
<dbReference type="NCBIfam" id="TIGR01091">
    <property type="entry name" value="upp"/>
    <property type="match status" value="1"/>
</dbReference>
<dbReference type="PANTHER" id="PTHR32315">
    <property type="entry name" value="ADENINE PHOSPHORIBOSYLTRANSFERASE"/>
    <property type="match status" value="1"/>
</dbReference>
<dbReference type="PANTHER" id="PTHR32315:SF4">
    <property type="entry name" value="URACIL PHOSPHORIBOSYLTRANSFERASE, CHLOROPLASTIC"/>
    <property type="match status" value="1"/>
</dbReference>
<dbReference type="Pfam" id="PF14681">
    <property type="entry name" value="UPRTase"/>
    <property type="match status" value="1"/>
</dbReference>
<dbReference type="SUPFAM" id="SSF53271">
    <property type="entry name" value="PRTase-like"/>
    <property type="match status" value="1"/>
</dbReference>
<feature type="chain" id="PRO_1000164815" description="Uracil phosphoribosyltransferase">
    <location>
        <begin position="1"/>
        <end position="209"/>
    </location>
</feature>
<feature type="binding site" evidence="1">
    <location>
        <position position="79"/>
    </location>
    <ligand>
        <name>5-phospho-alpha-D-ribose 1-diphosphate</name>
        <dbReference type="ChEBI" id="CHEBI:58017"/>
    </ligand>
</feature>
<feature type="binding site" evidence="1">
    <location>
        <position position="104"/>
    </location>
    <ligand>
        <name>5-phospho-alpha-D-ribose 1-diphosphate</name>
        <dbReference type="ChEBI" id="CHEBI:58017"/>
    </ligand>
</feature>
<feature type="binding site" evidence="1">
    <location>
        <begin position="131"/>
        <end position="139"/>
    </location>
    <ligand>
        <name>5-phospho-alpha-D-ribose 1-diphosphate</name>
        <dbReference type="ChEBI" id="CHEBI:58017"/>
    </ligand>
</feature>
<feature type="binding site" evidence="1">
    <location>
        <position position="194"/>
    </location>
    <ligand>
        <name>uracil</name>
        <dbReference type="ChEBI" id="CHEBI:17568"/>
    </ligand>
</feature>
<feature type="binding site" evidence="1">
    <location>
        <begin position="199"/>
        <end position="201"/>
    </location>
    <ligand>
        <name>uracil</name>
        <dbReference type="ChEBI" id="CHEBI:17568"/>
    </ligand>
</feature>
<feature type="binding site" evidence="1">
    <location>
        <position position="200"/>
    </location>
    <ligand>
        <name>5-phospho-alpha-D-ribose 1-diphosphate</name>
        <dbReference type="ChEBI" id="CHEBI:58017"/>
    </ligand>
</feature>
<comment type="function">
    <text evidence="1">Catalyzes the conversion of uracil and 5-phospho-alpha-D-ribose 1-diphosphate (PRPP) to UMP and diphosphate.</text>
</comment>
<comment type="catalytic activity">
    <reaction evidence="1">
        <text>UMP + diphosphate = 5-phospho-alpha-D-ribose 1-diphosphate + uracil</text>
        <dbReference type="Rhea" id="RHEA:13017"/>
        <dbReference type="ChEBI" id="CHEBI:17568"/>
        <dbReference type="ChEBI" id="CHEBI:33019"/>
        <dbReference type="ChEBI" id="CHEBI:57865"/>
        <dbReference type="ChEBI" id="CHEBI:58017"/>
        <dbReference type="EC" id="2.4.2.9"/>
    </reaction>
</comment>
<comment type="cofactor">
    <cofactor evidence="1">
        <name>Mg(2+)</name>
        <dbReference type="ChEBI" id="CHEBI:18420"/>
    </cofactor>
    <text evidence="1">Binds 1 Mg(2+) ion per subunit. The magnesium is bound as Mg-PRPP.</text>
</comment>
<comment type="activity regulation">
    <text evidence="1">Allosterically activated by GTP.</text>
</comment>
<comment type="pathway">
    <text evidence="1">Pyrimidine metabolism; UMP biosynthesis via salvage pathway; UMP from uracil: step 1/1.</text>
</comment>
<comment type="similarity">
    <text evidence="1">Belongs to the UPRTase family.</text>
</comment>
<proteinExistence type="inferred from homology"/>
<organism>
    <name type="scientific">Caulobacter vibrioides (strain NA1000 / CB15N)</name>
    <name type="common">Caulobacter crescentus</name>
    <dbReference type="NCBI Taxonomy" id="565050"/>
    <lineage>
        <taxon>Bacteria</taxon>
        <taxon>Pseudomonadati</taxon>
        <taxon>Pseudomonadota</taxon>
        <taxon>Alphaproteobacteria</taxon>
        <taxon>Caulobacterales</taxon>
        <taxon>Caulobacteraceae</taxon>
        <taxon>Caulobacter</taxon>
    </lineage>
</organism>
<protein>
    <recommendedName>
        <fullName evidence="1">Uracil phosphoribosyltransferase</fullName>
        <ecNumber evidence="1">2.4.2.9</ecNumber>
    </recommendedName>
    <alternativeName>
        <fullName evidence="1">UMP pyrophosphorylase</fullName>
    </alternativeName>
    <alternativeName>
        <fullName evidence="1">UPRTase</fullName>
    </alternativeName>
</protein>
<name>UPP_CAUVN</name>
<gene>
    <name evidence="1" type="primary">upp</name>
    <name type="ordered locus">CCNA_02351</name>
</gene>
<accession>B8GYP3</accession>
<keyword id="KW-0021">Allosteric enzyme</keyword>
<keyword id="KW-0328">Glycosyltransferase</keyword>
<keyword id="KW-0342">GTP-binding</keyword>
<keyword id="KW-0460">Magnesium</keyword>
<keyword id="KW-0547">Nucleotide-binding</keyword>
<keyword id="KW-1185">Reference proteome</keyword>
<keyword id="KW-0808">Transferase</keyword>